<sequence>MRLTIEVIKEKIVERKLFKRNRKSIEVKILAGLLYYLGLSLRKVSLFLSQFEDISHESVRIYYHKIKEVLNEPERKERNLIAIDEIKLKVGDKYIYAWSAIDVETKECLGVYISKTRNYLDTILFVKSILKFCSNKPKILVDGGKWYPWALRKLGLEFEKVKFGLRNCVESFFSVLKRRTKAFFNRFPNNSKFDTVISWIKSFMMFYNWVKSLT</sequence>
<organism>
    <name type="scientific">Methanocaldococcus jannaschii (strain ATCC 43067 / DSM 2661 / JAL-1 / JCM 10045 / NBRC 100440)</name>
    <name type="common">Methanococcus jannaschii</name>
    <dbReference type="NCBI Taxonomy" id="243232"/>
    <lineage>
        <taxon>Archaea</taxon>
        <taxon>Methanobacteriati</taxon>
        <taxon>Methanobacteriota</taxon>
        <taxon>Methanomada group</taxon>
        <taxon>Methanococci</taxon>
        <taxon>Methanococcales</taxon>
        <taxon>Methanocaldococcaceae</taxon>
        <taxon>Methanocaldococcus</taxon>
    </lineage>
</organism>
<proteinExistence type="predicted"/>
<dbReference type="EMBL" id="L77117">
    <property type="protein sequence ID" value="AAB97994.1"/>
    <property type="molecule type" value="Genomic_DNA"/>
</dbReference>
<dbReference type="PIR" id="A64302">
    <property type="entry name" value="A64302"/>
</dbReference>
<dbReference type="RefSeq" id="WP_010869509.1">
    <property type="nucleotide sequence ID" value="NC_000909.1"/>
</dbReference>
<dbReference type="SMR" id="Q60323"/>
<dbReference type="PaxDb" id="243232-MJ_0017"/>
<dbReference type="EnsemblBacteria" id="AAB97994">
    <property type="protein sequence ID" value="AAB97994"/>
    <property type="gene ID" value="MJ_0017"/>
</dbReference>
<dbReference type="GeneID" id="1450855"/>
<dbReference type="KEGG" id="mja:MJ_0017"/>
<dbReference type="eggNOG" id="arCOG02134">
    <property type="taxonomic scope" value="Archaea"/>
</dbReference>
<dbReference type="HOGENOM" id="CLU_079548_0_0_2"/>
<dbReference type="InParanoid" id="Q60323"/>
<dbReference type="OrthoDB" id="65243at2157"/>
<dbReference type="PhylomeDB" id="Q60323"/>
<dbReference type="Proteomes" id="UP000000805">
    <property type="component" value="Chromosome"/>
</dbReference>
<dbReference type="InterPro" id="IPR032874">
    <property type="entry name" value="DDE_dom"/>
</dbReference>
<dbReference type="InterPro" id="IPR012337">
    <property type="entry name" value="RNaseH-like_sf"/>
</dbReference>
<dbReference type="InterPro" id="IPR047930">
    <property type="entry name" value="Transpos_IS6"/>
</dbReference>
<dbReference type="NCBIfam" id="NF033587">
    <property type="entry name" value="transpos_IS6"/>
    <property type="match status" value="1"/>
</dbReference>
<dbReference type="PANTHER" id="PTHR39967">
    <property type="match status" value="1"/>
</dbReference>
<dbReference type="PANTHER" id="PTHR39967:SF1">
    <property type="entry name" value="ISH14-TYPE TRANSPOSASE HSIRS44"/>
    <property type="match status" value="1"/>
</dbReference>
<dbReference type="Pfam" id="PF13610">
    <property type="entry name" value="DDE_Tnp_IS240"/>
    <property type="match status" value="1"/>
</dbReference>
<dbReference type="SUPFAM" id="SSF53098">
    <property type="entry name" value="Ribonuclease H-like"/>
    <property type="match status" value="1"/>
</dbReference>
<reference key="1">
    <citation type="journal article" date="1996" name="Science">
        <title>Complete genome sequence of the methanogenic archaeon, Methanococcus jannaschii.</title>
        <authorList>
            <person name="Bult C.J."/>
            <person name="White O."/>
            <person name="Olsen G.J."/>
            <person name="Zhou L."/>
            <person name="Fleischmann R.D."/>
            <person name="Sutton G.G."/>
            <person name="Blake J.A."/>
            <person name="FitzGerald L.M."/>
            <person name="Clayton R.A."/>
            <person name="Gocayne J.D."/>
            <person name="Kerlavage A.R."/>
            <person name="Dougherty B.A."/>
            <person name="Tomb J.-F."/>
            <person name="Adams M.D."/>
            <person name="Reich C.I."/>
            <person name="Overbeek R."/>
            <person name="Kirkness E.F."/>
            <person name="Weinstock K.G."/>
            <person name="Merrick J.M."/>
            <person name="Glodek A."/>
            <person name="Scott J.L."/>
            <person name="Geoghagen N.S.M."/>
            <person name="Weidman J.F."/>
            <person name="Fuhrmann J.L."/>
            <person name="Nguyen D."/>
            <person name="Utterback T.R."/>
            <person name="Kelley J.M."/>
            <person name="Peterson J.D."/>
            <person name="Sadow P.W."/>
            <person name="Hanna M.C."/>
            <person name="Cotton M.D."/>
            <person name="Roberts K.M."/>
            <person name="Hurst M.A."/>
            <person name="Kaine B.P."/>
            <person name="Borodovsky M."/>
            <person name="Klenk H.-P."/>
            <person name="Fraser C.M."/>
            <person name="Smith H.O."/>
            <person name="Woese C.R."/>
            <person name="Venter J.C."/>
        </authorList>
    </citation>
    <scope>NUCLEOTIDE SEQUENCE [LARGE SCALE GENOMIC DNA]</scope>
    <source>
        <strain>ATCC 43067 / DSM 2661 / JAL-1 / JCM 10045 / NBRC 100440</strain>
    </source>
</reference>
<name>Y017_METJA</name>
<accession>Q60323</accession>
<keyword id="KW-1185">Reference proteome</keyword>
<gene>
    <name type="ordered locus">MJ0017</name>
</gene>
<feature type="chain" id="PRO_0000106657" description="Uncharacterized protein MJ0017">
    <location>
        <begin position="1"/>
        <end position="214"/>
    </location>
</feature>
<protein>
    <recommendedName>
        <fullName>Uncharacterized protein MJ0017</fullName>
    </recommendedName>
</protein>